<accession>B1LEP6</accession>
<protein>
    <recommendedName>
        <fullName evidence="1">Anhydro-N-acetylmuramic acid kinase</fullName>
        <ecNumber evidence="1">2.7.1.170</ecNumber>
    </recommendedName>
    <alternativeName>
        <fullName evidence="1">AnhMurNAc kinase</fullName>
    </alternativeName>
</protein>
<dbReference type="EC" id="2.7.1.170" evidence="1"/>
<dbReference type="EMBL" id="CP000970">
    <property type="protein sequence ID" value="ACB16665.1"/>
    <property type="molecule type" value="Genomic_DNA"/>
</dbReference>
<dbReference type="RefSeq" id="WP_000835076.1">
    <property type="nucleotide sequence ID" value="NC_010498.1"/>
</dbReference>
<dbReference type="SMR" id="B1LEP6"/>
<dbReference type="KEGG" id="ecm:EcSMS35_1559"/>
<dbReference type="HOGENOM" id="CLU_038782_0_0_6"/>
<dbReference type="UniPathway" id="UPA00343"/>
<dbReference type="UniPathway" id="UPA00544"/>
<dbReference type="Proteomes" id="UP000007011">
    <property type="component" value="Chromosome"/>
</dbReference>
<dbReference type="GO" id="GO:0005524">
    <property type="term" value="F:ATP binding"/>
    <property type="evidence" value="ECO:0007669"/>
    <property type="project" value="UniProtKB-UniRule"/>
</dbReference>
<dbReference type="GO" id="GO:0016301">
    <property type="term" value="F:kinase activity"/>
    <property type="evidence" value="ECO:0007669"/>
    <property type="project" value="UniProtKB-KW"/>
</dbReference>
<dbReference type="GO" id="GO:0016773">
    <property type="term" value="F:phosphotransferase activity, alcohol group as acceptor"/>
    <property type="evidence" value="ECO:0007669"/>
    <property type="project" value="UniProtKB-UniRule"/>
</dbReference>
<dbReference type="GO" id="GO:0097175">
    <property type="term" value="P:1,6-anhydro-N-acetyl-beta-muramic acid catabolic process"/>
    <property type="evidence" value="ECO:0007669"/>
    <property type="project" value="UniProtKB-UniRule"/>
</dbReference>
<dbReference type="GO" id="GO:0006040">
    <property type="term" value="P:amino sugar metabolic process"/>
    <property type="evidence" value="ECO:0007669"/>
    <property type="project" value="InterPro"/>
</dbReference>
<dbReference type="GO" id="GO:0009254">
    <property type="term" value="P:peptidoglycan turnover"/>
    <property type="evidence" value="ECO:0007669"/>
    <property type="project" value="UniProtKB-UniRule"/>
</dbReference>
<dbReference type="CDD" id="cd24050">
    <property type="entry name" value="ASKHA_NBD_ANMK"/>
    <property type="match status" value="1"/>
</dbReference>
<dbReference type="FunFam" id="3.30.420.40:FF:000090">
    <property type="entry name" value="Anhydro-N-acetylmuramic acid kinase"/>
    <property type="match status" value="1"/>
</dbReference>
<dbReference type="Gene3D" id="3.30.420.40">
    <property type="match status" value="2"/>
</dbReference>
<dbReference type="HAMAP" id="MF_01270">
    <property type="entry name" value="AnhMurNAc_kinase"/>
    <property type="match status" value="1"/>
</dbReference>
<dbReference type="InterPro" id="IPR005338">
    <property type="entry name" value="Anhydro_N_Ac-Mur_kinase"/>
</dbReference>
<dbReference type="InterPro" id="IPR043129">
    <property type="entry name" value="ATPase_NBD"/>
</dbReference>
<dbReference type="NCBIfam" id="NF007138">
    <property type="entry name" value="PRK09585.1-1"/>
    <property type="match status" value="1"/>
</dbReference>
<dbReference type="NCBIfam" id="NF007139">
    <property type="entry name" value="PRK09585.1-3"/>
    <property type="match status" value="1"/>
</dbReference>
<dbReference type="NCBIfam" id="NF007148">
    <property type="entry name" value="PRK09585.3-2"/>
    <property type="match status" value="1"/>
</dbReference>
<dbReference type="PANTHER" id="PTHR30605">
    <property type="entry name" value="ANHYDRO-N-ACETYLMURAMIC ACID KINASE"/>
    <property type="match status" value="1"/>
</dbReference>
<dbReference type="PANTHER" id="PTHR30605:SF0">
    <property type="entry name" value="ANHYDRO-N-ACETYLMURAMIC ACID KINASE"/>
    <property type="match status" value="1"/>
</dbReference>
<dbReference type="Pfam" id="PF03702">
    <property type="entry name" value="AnmK"/>
    <property type="match status" value="1"/>
</dbReference>
<dbReference type="SUPFAM" id="SSF53067">
    <property type="entry name" value="Actin-like ATPase domain"/>
    <property type="match status" value="1"/>
</dbReference>
<proteinExistence type="inferred from homology"/>
<reference key="1">
    <citation type="journal article" date="2008" name="J. Bacteriol.">
        <title>Insights into the environmental resistance gene pool from the genome sequence of the multidrug-resistant environmental isolate Escherichia coli SMS-3-5.</title>
        <authorList>
            <person name="Fricke W.F."/>
            <person name="Wright M.S."/>
            <person name="Lindell A.H."/>
            <person name="Harkins D.M."/>
            <person name="Baker-Austin C."/>
            <person name="Ravel J."/>
            <person name="Stepanauskas R."/>
        </authorList>
    </citation>
    <scope>NUCLEOTIDE SEQUENCE [LARGE SCALE GENOMIC DNA]</scope>
    <source>
        <strain>SMS-3-5 / SECEC</strain>
    </source>
</reference>
<organism>
    <name type="scientific">Escherichia coli (strain SMS-3-5 / SECEC)</name>
    <dbReference type="NCBI Taxonomy" id="439855"/>
    <lineage>
        <taxon>Bacteria</taxon>
        <taxon>Pseudomonadati</taxon>
        <taxon>Pseudomonadota</taxon>
        <taxon>Gammaproteobacteria</taxon>
        <taxon>Enterobacterales</taxon>
        <taxon>Enterobacteriaceae</taxon>
        <taxon>Escherichia</taxon>
    </lineage>
</organism>
<gene>
    <name evidence="1" type="primary">anmK</name>
    <name type="ordered locus">EcSMS35_1559</name>
</gene>
<name>ANMK_ECOSM</name>
<keyword id="KW-0067">ATP-binding</keyword>
<keyword id="KW-0119">Carbohydrate metabolism</keyword>
<keyword id="KW-0418">Kinase</keyword>
<keyword id="KW-0547">Nucleotide-binding</keyword>
<keyword id="KW-0808">Transferase</keyword>
<sequence>MKSGRFIGVMSGTSLDGVDVVLATIDEHRVAQLASLSWPIPVSLKQAVLDICQGQQLTLSQFGQLDTQLGRLFADAVNALLKEQNLQARDIVAIGCHGQTVWHEPTGVAPHTLQIGDNNQIVARTGITVVGDFRRRDIALGGQGAPLVPAFHHALLAHPTERRMVLNIGGIANLSLLIPGQPVGGYDTGPGNMLMDAWIWRQAGKPYDKDAEWARAGKVILPLLQNMLSDPYFSQPAPKSTGREYFNYGWLERHLRHFPGVDPRDVQATLAELTAVTISEQVLLSGGCERLMVCGGGSRNPLLMARLAALLPGTEVTTTDAVGISGDDMEALAFAWLAWRTLAGLPGNLPSVTGASQETVLGAIFPANL</sequence>
<evidence type="ECO:0000255" key="1">
    <source>
        <dbReference type="HAMAP-Rule" id="MF_01270"/>
    </source>
</evidence>
<feature type="chain" id="PRO_1000140160" description="Anhydro-N-acetylmuramic acid kinase">
    <location>
        <begin position="1"/>
        <end position="369"/>
    </location>
</feature>
<feature type="binding site" evidence="1">
    <location>
        <begin position="12"/>
        <end position="19"/>
    </location>
    <ligand>
        <name>ATP</name>
        <dbReference type="ChEBI" id="CHEBI:30616"/>
    </ligand>
</feature>
<comment type="function">
    <text evidence="1">Catalyzes the specific phosphorylation of 1,6-anhydro-N-acetylmuramic acid (anhMurNAc) with the simultaneous cleavage of the 1,6-anhydro ring, generating MurNAc-6-P. Is required for the utilization of anhMurNAc either imported from the medium or derived from its own cell wall murein, and thus plays a role in cell wall recycling.</text>
</comment>
<comment type="catalytic activity">
    <reaction evidence="1">
        <text>1,6-anhydro-N-acetyl-beta-muramate + ATP + H2O = N-acetyl-D-muramate 6-phosphate + ADP + H(+)</text>
        <dbReference type="Rhea" id="RHEA:24952"/>
        <dbReference type="ChEBI" id="CHEBI:15377"/>
        <dbReference type="ChEBI" id="CHEBI:15378"/>
        <dbReference type="ChEBI" id="CHEBI:30616"/>
        <dbReference type="ChEBI" id="CHEBI:58690"/>
        <dbReference type="ChEBI" id="CHEBI:58722"/>
        <dbReference type="ChEBI" id="CHEBI:456216"/>
        <dbReference type="EC" id="2.7.1.170"/>
    </reaction>
</comment>
<comment type="pathway">
    <text evidence="1">Amino-sugar metabolism; 1,6-anhydro-N-acetylmuramate degradation.</text>
</comment>
<comment type="pathway">
    <text evidence="1">Cell wall biogenesis; peptidoglycan recycling.</text>
</comment>
<comment type="similarity">
    <text evidence="1">Belongs to the anhydro-N-acetylmuramic acid kinase family.</text>
</comment>